<dbReference type="EC" id="6.3.4.21" evidence="2"/>
<dbReference type="EMBL" id="AY214338">
    <property type="protein sequence ID" value="AAP69616.1"/>
    <property type="molecule type" value="mRNA"/>
</dbReference>
<dbReference type="EMBL" id="AAFI02000003">
    <property type="protein sequence ID" value="EAL73689.1"/>
    <property type="molecule type" value="Genomic_DNA"/>
</dbReference>
<dbReference type="RefSeq" id="XP_647373.1">
    <property type="nucleotide sequence ID" value="XM_642281.1"/>
</dbReference>
<dbReference type="SMR" id="Q55G10"/>
<dbReference type="FunCoup" id="Q55G10">
    <property type="interactions" value="250"/>
</dbReference>
<dbReference type="STRING" id="44689.Q55G10"/>
<dbReference type="PaxDb" id="44689-DDB0215395"/>
<dbReference type="EnsemblProtists" id="EAL73689">
    <property type="protein sequence ID" value="EAL73689"/>
    <property type="gene ID" value="DDB_G0268472"/>
</dbReference>
<dbReference type="GeneID" id="8616182"/>
<dbReference type="KEGG" id="ddi:DDB_G0268472"/>
<dbReference type="dictyBase" id="DDB_G0268472">
    <property type="gene designation" value="naprt"/>
</dbReference>
<dbReference type="VEuPathDB" id="AmoebaDB:DDB_G0268472"/>
<dbReference type="eggNOG" id="KOG2511">
    <property type="taxonomic scope" value="Eukaryota"/>
</dbReference>
<dbReference type="HOGENOM" id="CLU_025154_1_0_1"/>
<dbReference type="InParanoid" id="Q55G10"/>
<dbReference type="OMA" id="VYFPGSP"/>
<dbReference type="PhylomeDB" id="Q55G10"/>
<dbReference type="Reactome" id="R-DDI-197264">
    <property type="pathway name" value="Nicotinamide salvaging"/>
</dbReference>
<dbReference type="Reactome" id="R-DDI-6798695">
    <property type="pathway name" value="Neutrophil degranulation"/>
</dbReference>
<dbReference type="UniPathway" id="UPA00253">
    <property type="reaction ID" value="UER00457"/>
</dbReference>
<dbReference type="PRO" id="PR:Q55G10"/>
<dbReference type="Proteomes" id="UP000002195">
    <property type="component" value="Chromosome 1"/>
</dbReference>
<dbReference type="GO" id="GO:0005829">
    <property type="term" value="C:cytosol"/>
    <property type="evidence" value="ECO:0000318"/>
    <property type="project" value="GO_Central"/>
</dbReference>
<dbReference type="GO" id="GO:0046872">
    <property type="term" value="F:metal ion binding"/>
    <property type="evidence" value="ECO:0007669"/>
    <property type="project" value="UniProtKB-KW"/>
</dbReference>
<dbReference type="GO" id="GO:0004516">
    <property type="term" value="F:nicotinate phosphoribosyltransferase activity"/>
    <property type="evidence" value="ECO:0000318"/>
    <property type="project" value="GO_Central"/>
</dbReference>
<dbReference type="GO" id="GO:0016740">
    <property type="term" value="F:transferase activity"/>
    <property type="evidence" value="ECO:0007669"/>
    <property type="project" value="UniProtKB-KW"/>
</dbReference>
<dbReference type="GO" id="GO:0034355">
    <property type="term" value="P:NAD biosynthetic process via the salvage pathway"/>
    <property type="evidence" value="ECO:0000318"/>
    <property type="project" value="GO_Central"/>
</dbReference>
<dbReference type="CDD" id="cd01570">
    <property type="entry name" value="NAPRTase_A"/>
    <property type="match status" value="1"/>
</dbReference>
<dbReference type="Gene3D" id="3.20.20.70">
    <property type="entry name" value="Aldolase class I"/>
    <property type="match status" value="1"/>
</dbReference>
<dbReference type="Gene3D" id="3.20.140.10">
    <property type="entry name" value="nicotinate phosphoribosyltransferase"/>
    <property type="match status" value="1"/>
</dbReference>
<dbReference type="InterPro" id="IPR013785">
    <property type="entry name" value="Aldolase_TIM"/>
</dbReference>
<dbReference type="InterPro" id="IPR041525">
    <property type="entry name" value="N/Namide_PRibTrfase"/>
</dbReference>
<dbReference type="InterPro" id="IPR041619">
    <property type="entry name" value="NAPRTase_C"/>
</dbReference>
<dbReference type="InterPro" id="IPR040727">
    <property type="entry name" value="NAPRTase_N"/>
</dbReference>
<dbReference type="InterPro" id="IPR007229">
    <property type="entry name" value="Nic_PRibTrfase-Fam"/>
</dbReference>
<dbReference type="InterPro" id="IPR006405">
    <property type="entry name" value="Nic_PRibTrfase_pncB"/>
</dbReference>
<dbReference type="InterPro" id="IPR036068">
    <property type="entry name" value="Nicotinate_pribotase-like_C"/>
</dbReference>
<dbReference type="NCBIfam" id="TIGR01513">
    <property type="entry name" value="NAPRTase_put"/>
    <property type="match status" value="1"/>
</dbReference>
<dbReference type="NCBIfam" id="NF006695">
    <property type="entry name" value="PRK09243.1-2"/>
    <property type="match status" value="1"/>
</dbReference>
<dbReference type="PANTHER" id="PTHR11098">
    <property type="entry name" value="NICOTINATE PHOSPHORIBOSYLTRANSFERASE"/>
    <property type="match status" value="1"/>
</dbReference>
<dbReference type="PANTHER" id="PTHR11098:SF1">
    <property type="entry name" value="NICOTINATE PHOSPHORIBOSYLTRANSFERASE"/>
    <property type="match status" value="1"/>
</dbReference>
<dbReference type="Pfam" id="PF04095">
    <property type="entry name" value="NAPRTase"/>
    <property type="match status" value="1"/>
</dbReference>
<dbReference type="Pfam" id="PF17956">
    <property type="entry name" value="NAPRTase_C"/>
    <property type="match status" value="1"/>
</dbReference>
<dbReference type="Pfam" id="PF17767">
    <property type="entry name" value="NAPRTase_N"/>
    <property type="match status" value="1"/>
</dbReference>
<dbReference type="PIRSF" id="PIRSF000484">
    <property type="entry name" value="NAPRT"/>
    <property type="match status" value="1"/>
</dbReference>
<dbReference type="SUPFAM" id="SSF51690">
    <property type="entry name" value="Nicotinate/Quinolinate PRTase C-terminal domain-like"/>
    <property type="match status" value="1"/>
</dbReference>
<dbReference type="SUPFAM" id="SSF54675">
    <property type="entry name" value="Nicotinate/Quinolinate PRTase N-terminal domain-like"/>
    <property type="match status" value="1"/>
</dbReference>
<keyword id="KW-0436">Ligase</keyword>
<keyword id="KW-0460">Magnesium</keyword>
<keyword id="KW-0464">Manganese</keyword>
<keyword id="KW-0479">Metal-binding</keyword>
<keyword id="KW-0597">Phosphoprotein</keyword>
<keyword id="KW-0662">Pyridine nucleotide biosynthesis</keyword>
<keyword id="KW-1185">Reference proteome</keyword>
<keyword id="KW-0808">Transferase</keyword>
<gene>
    <name type="primary">naprt</name>
    <name type="ORF">DDB_G0268472</name>
</gene>
<protein>
    <recommendedName>
        <fullName>Nicotinate phosphoribosyltransferase</fullName>
        <shortName>NAPRTase</shortName>
        <ecNumber evidence="2">6.3.4.21</ecNumber>
    </recommendedName>
</protein>
<reference key="1">
    <citation type="submission" date="2003-01" db="EMBL/GenBank/DDBJ databases">
        <title>Sequence analysis and molecular evolution of the eukaryotic nicotinate phosphoribosyltransferase family.</title>
        <authorList>
            <person name="Huang C.-H."/>
            <person name="Peng J."/>
            <person name="Chen Y."/>
        </authorList>
    </citation>
    <scope>NUCLEOTIDE SEQUENCE [MRNA]</scope>
    <source>
        <strain>AX4</strain>
    </source>
</reference>
<reference key="2">
    <citation type="journal article" date="2005" name="Nature">
        <title>The genome of the social amoeba Dictyostelium discoideum.</title>
        <authorList>
            <person name="Eichinger L."/>
            <person name="Pachebat J.A."/>
            <person name="Gloeckner G."/>
            <person name="Rajandream M.A."/>
            <person name="Sucgang R."/>
            <person name="Berriman M."/>
            <person name="Song J."/>
            <person name="Olsen R."/>
            <person name="Szafranski K."/>
            <person name="Xu Q."/>
            <person name="Tunggal B."/>
            <person name="Kummerfeld S."/>
            <person name="Madera M."/>
            <person name="Konfortov B.A."/>
            <person name="Rivero F."/>
            <person name="Bankier A.T."/>
            <person name="Lehmann R."/>
            <person name="Hamlin N."/>
            <person name="Davies R."/>
            <person name="Gaudet P."/>
            <person name="Fey P."/>
            <person name="Pilcher K."/>
            <person name="Chen G."/>
            <person name="Saunders D."/>
            <person name="Sodergren E.J."/>
            <person name="Davis P."/>
            <person name="Kerhornou A."/>
            <person name="Nie X."/>
            <person name="Hall N."/>
            <person name="Anjard C."/>
            <person name="Hemphill L."/>
            <person name="Bason N."/>
            <person name="Farbrother P."/>
            <person name="Desany B."/>
            <person name="Just E."/>
            <person name="Morio T."/>
            <person name="Rost R."/>
            <person name="Churcher C.M."/>
            <person name="Cooper J."/>
            <person name="Haydock S."/>
            <person name="van Driessche N."/>
            <person name="Cronin A."/>
            <person name="Goodhead I."/>
            <person name="Muzny D.M."/>
            <person name="Mourier T."/>
            <person name="Pain A."/>
            <person name="Lu M."/>
            <person name="Harper D."/>
            <person name="Lindsay R."/>
            <person name="Hauser H."/>
            <person name="James K.D."/>
            <person name="Quiles M."/>
            <person name="Madan Babu M."/>
            <person name="Saito T."/>
            <person name="Buchrieser C."/>
            <person name="Wardroper A."/>
            <person name="Felder M."/>
            <person name="Thangavelu M."/>
            <person name="Johnson D."/>
            <person name="Knights A."/>
            <person name="Loulseged H."/>
            <person name="Mungall K.L."/>
            <person name="Oliver K."/>
            <person name="Price C."/>
            <person name="Quail M.A."/>
            <person name="Urushihara H."/>
            <person name="Hernandez J."/>
            <person name="Rabbinowitsch E."/>
            <person name="Steffen D."/>
            <person name="Sanders M."/>
            <person name="Ma J."/>
            <person name="Kohara Y."/>
            <person name="Sharp S."/>
            <person name="Simmonds M.N."/>
            <person name="Spiegler S."/>
            <person name="Tivey A."/>
            <person name="Sugano S."/>
            <person name="White B."/>
            <person name="Walker D."/>
            <person name="Woodward J.R."/>
            <person name="Winckler T."/>
            <person name="Tanaka Y."/>
            <person name="Shaulsky G."/>
            <person name="Schleicher M."/>
            <person name="Weinstock G.M."/>
            <person name="Rosenthal A."/>
            <person name="Cox E.C."/>
            <person name="Chisholm R.L."/>
            <person name="Gibbs R.A."/>
            <person name="Loomis W.F."/>
            <person name="Platzer M."/>
            <person name="Kay R.R."/>
            <person name="Williams J.G."/>
            <person name="Dear P.H."/>
            <person name="Noegel A.A."/>
            <person name="Barrell B.G."/>
            <person name="Kuspa A."/>
        </authorList>
    </citation>
    <scope>NUCLEOTIDE SEQUENCE [LARGE SCALE GENOMIC DNA]</scope>
    <source>
        <strain>AX4</strain>
    </source>
</reference>
<sequence length="589" mass="66085">MSQSNTPLKRKKTENGYSENGSTTGATSNQIRELKRATTVDYVYRDQESKDKIKPLNGFVTPLLTDLYQITMAYSLWKNNRHEIPAVFDLYFRKSPFGGEFTVFAGLEEVIRFVSDFHYTKEEVGFIKEMIPDCEQEFLDYLSKLDSSSVTLYAMKEGSVVFPRVPLLRVEGPMILCQLFETTLLCLVNFASLVATNAARHRLAVGKEKVMLEFGLRRAQGPDGAMSASRYSYLGGADGTSNVLAHCFFGIPIRGTHAHSFITNYSGPDELLDASIKDTNGNVHNLLEMSQKYRDELGYTATNLSELVAFVAYARTFPNGLVALVDTYDTLASGVPNFICVALALHQLGYKAVGIRLDSGDLSYLSKASRKLFKQIGEQFKIDYFEKFSIVASNDLNEPTIIALNRQGHEIDVFAIGTNLVTCQAQPALGCVYKLVEINGSPRIKLSQEANKITLPGRKTAYRLFGSEGHPLVDLLVDDNDMIKDGSKQIPQVGKKVLCLHPFEEQKRVIVTPVQIEKLHHIVFEKGQLTMPLPALNDIREYCFQQISKVREDHLRNSNPTPYKVSVTKELFDTLHNLWLDSVPIKEMK</sequence>
<organism>
    <name type="scientific">Dictyostelium discoideum</name>
    <name type="common">Social amoeba</name>
    <dbReference type="NCBI Taxonomy" id="44689"/>
    <lineage>
        <taxon>Eukaryota</taxon>
        <taxon>Amoebozoa</taxon>
        <taxon>Evosea</taxon>
        <taxon>Eumycetozoa</taxon>
        <taxon>Dictyostelia</taxon>
        <taxon>Dictyosteliales</taxon>
        <taxon>Dictyosteliaceae</taxon>
        <taxon>Dictyostelium</taxon>
    </lineage>
</organism>
<feature type="chain" id="PRO_0000371328" description="Nicotinate phosphoribosyltransferase">
    <location>
        <begin position="1"/>
        <end position="589"/>
    </location>
</feature>
<feature type="region of interest" description="Disordered" evidence="4">
    <location>
        <begin position="1"/>
        <end position="30"/>
    </location>
</feature>
<feature type="compositionally biased region" description="Polar residues" evidence="4">
    <location>
        <begin position="15"/>
        <end position="30"/>
    </location>
</feature>
<feature type="binding site" evidence="3">
    <location>
        <position position="68"/>
    </location>
    <ligand>
        <name>nicotinate</name>
        <dbReference type="ChEBI" id="CHEBI:32544"/>
    </ligand>
</feature>
<feature type="binding site" evidence="3">
    <location>
        <position position="256"/>
    </location>
    <ligand>
        <name>nicotinate</name>
        <dbReference type="ChEBI" id="CHEBI:32544"/>
    </ligand>
</feature>
<feature type="binding site" evidence="3">
    <location>
        <position position="356"/>
    </location>
    <ligand>
        <name>nicotinate</name>
        <dbReference type="ChEBI" id="CHEBI:32544"/>
    </ligand>
</feature>
<feature type="binding site" evidence="3">
    <location>
        <position position="418"/>
    </location>
    <ligand>
        <name>5-phospho-alpha-D-ribose 1-diphosphate</name>
        <dbReference type="ChEBI" id="CHEBI:58017"/>
    </ligand>
</feature>
<feature type="modified residue" description="Phosphohistidine" evidence="1">
    <location>
        <position position="259"/>
    </location>
</feature>
<feature type="sequence conflict" description="In Ref. 1; AAP69616." evidence="5" ref="1">
    <original>S</original>
    <variation>F</variation>
    <location>
        <position position="487"/>
    </location>
</feature>
<evidence type="ECO:0000250" key="1">
    <source>
        <dbReference type="UniProtKB" id="P22253"/>
    </source>
</evidence>
<evidence type="ECO:0000250" key="2">
    <source>
        <dbReference type="UniProtKB" id="Q6XQN6"/>
    </source>
</evidence>
<evidence type="ECO:0000250" key="3">
    <source>
        <dbReference type="UniProtKB" id="Q9HJ28"/>
    </source>
</evidence>
<evidence type="ECO:0000256" key="4">
    <source>
        <dbReference type="SAM" id="MobiDB-lite"/>
    </source>
</evidence>
<evidence type="ECO:0000305" key="5"/>
<accession>Q55G10</accession>
<accession>Q6XQM3</accession>
<proteinExistence type="evidence at transcript level"/>
<comment type="function">
    <text evidence="2">Catalyzes the first step in the biosynthesis of NAD from nicotinic acid, the ATP-dependent synthesis of beta-nicotinate D-ribonucleotide from nicotinate and 5-phospho-D-ribose 1-phosphate. Helps prevent cellular oxidative stress via its role in NAD biosynthesis.</text>
</comment>
<comment type="catalytic activity">
    <reaction evidence="2">
        <text>nicotinate + 5-phospho-alpha-D-ribose 1-diphosphate + ATP + H2O = nicotinate beta-D-ribonucleotide + ADP + phosphate + diphosphate</text>
        <dbReference type="Rhea" id="RHEA:36163"/>
        <dbReference type="ChEBI" id="CHEBI:15377"/>
        <dbReference type="ChEBI" id="CHEBI:30616"/>
        <dbReference type="ChEBI" id="CHEBI:32544"/>
        <dbReference type="ChEBI" id="CHEBI:33019"/>
        <dbReference type="ChEBI" id="CHEBI:43474"/>
        <dbReference type="ChEBI" id="CHEBI:57502"/>
        <dbReference type="ChEBI" id="CHEBI:58017"/>
        <dbReference type="ChEBI" id="CHEBI:456216"/>
        <dbReference type="EC" id="6.3.4.21"/>
    </reaction>
</comment>
<comment type="cofactor">
    <cofactor evidence="2">
        <name>Mg(2+)</name>
        <dbReference type="ChEBI" id="CHEBI:18420"/>
    </cofactor>
    <cofactor evidence="2">
        <name>Mn(2+)</name>
        <dbReference type="ChEBI" id="CHEBI:29035"/>
    </cofactor>
    <text evidence="2">Activity is highest with Mn(2+).</text>
</comment>
<comment type="pathway">
    <text evidence="2">Cofactor biosynthesis; NAD(+) biosynthesis; nicotinate D-ribonucleotide from nicotinate: step 1/1.</text>
</comment>
<comment type="PTM">
    <text evidence="1">Transiently phosphorylated on a His residue during the reaction cycle. Phosphorylation strongly increases the affinity for substrates and increases the rate of nicotinate D-ribonucleotide production. Dephosphorylation regenerates the low-affinity form of the enzyme, leading to product release.</text>
</comment>
<comment type="similarity">
    <text evidence="5">Belongs to the NAPRTase family.</text>
</comment>
<name>PNCB_DICDI</name>